<organism>
    <name type="scientific">Mumps virus genotype B (strain Urabe vaccine AM9)</name>
    <name type="common">MuV</name>
    <dbReference type="NCBI Taxonomy" id="11175"/>
    <lineage>
        <taxon>Viruses</taxon>
        <taxon>Riboviria</taxon>
        <taxon>Orthornavirae</taxon>
        <taxon>Negarnaviricota</taxon>
        <taxon>Haploviricotina</taxon>
        <taxon>Monjiviricetes</taxon>
        <taxon>Mononegavirales</taxon>
        <taxon>Paramyxoviridae</taxon>
        <taxon>Rubulavirinae</taxon>
        <taxon>Orthorubulavirus</taxon>
        <taxon>Orthorubulavirus parotitidis</taxon>
        <taxon>Mumps orthorubulavirus</taxon>
    </lineage>
</organism>
<sequence length="57" mass="6755">MPAIQPPLYPTFLLLILLSLIVTLYVWIISTITYKTVVRHAALYQRSFFRWSFDHSL</sequence>
<accession>P20716</accession>
<evidence type="ECO:0000250" key="1">
    <source>
        <dbReference type="UniProtKB" id="P22110"/>
    </source>
</evidence>
<evidence type="ECO:0000250" key="2">
    <source>
        <dbReference type="UniProtKB" id="P22112"/>
    </source>
</evidence>
<evidence type="ECO:0000255" key="3"/>
<evidence type="ECO:0000305" key="4"/>
<organismHost>
    <name type="scientific">Homo sapiens</name>
    <name type="common">Human</name>
    <dbReference type="NCBI Taxonomy" id="9606"/>
</organismHost>
<proteinExistence type="inferred from homology"/>
<protein>
    <recommendedName>
        <fullName>Small hydrophobic protein</fullName>
    </recommendedName>
</protein>
<reference key="1">
    <citation type="journal article" date="1991" name="J. Gen. Virol.">
        <title>Comparison of the nucleotide sequence of the SH gene and flanking regions of mumps vaccine virus (Urabe strain) grown on different substrates and isolated from vaccinees.</title>
        <authorList>
            <person name="Turner P.C."/>
            <person name="Forsey T."/>
            <person name="Minor P.D."/>
        </authorList>
    </citation>
    <scope>NUCLEOTIDE SEQUENCE [GENOMIC RNA]</scope>
</reference>
<reference key="2">
    <citation type="submission" date="1990-11" db="EMBL/GenBank/DDBJ databases">
        <authorList>
            <person name="Takeuchi K."/>
        </authorList>
    </citation>
    <scope>NUCLEOTIDE SEQUENCE [GENOMIC RNA]</scope>
</reference>
<dbReference type="EMBL" id="X52816">
    <property type="protein sequence ID" value="CAA37000.1"/>
    <property type="molecule type" value="Genomic_RNA"/>
</dbReference>
<dbReference type="EMBL" id="D90236">
    <property type="protein sequence ID" value="BAA14284.1"/>
    <property type="molecule type" value="Genomic_RNA"/>
</dbReference>
<dbReference type="PIR" id="A38479">
    <property type="entry name" value="SHNZMU"/>
</dbReference>
<dbReference type="SMR" id="P20716"/>
<dbReference type="GO" id="GO:0020002">
    <property type="term" value="C:host cell plasma membrane"/>
    <property type="evidence" value="ECO:0007669"/>
    <property type="project" value="UniProtKB-SubCell"/>
</dbReference>
<dbReference type="GO" id="GO:0016020">
    <property type="term" value="C:membrane"/>
    <property type="evidence" value="ECO:0007669"/>
    <property type="project" value="UniProtKB-KW"/>
</dbReference>
<dbReference type="GO" id="GO:0055036">
    <property type="term" value="C:virion membrane"/>
    <property type="evidence" value="ECO:0007669"/>
    <property type="project" value="UniProtKB-SubCell"/>
</dbReference>
<dbReference type="GO" id="GO:0085034">
    <property type="term" value="P:symbiont-mediated suppression of host NF-kappaB cascade"/>
    <property type="evidence" value="ECO:0007669"/>
    <property type="project" value="UniProtKB-KW"/>
</dbReference>
<dbReference type="InterPro" id="IPR001477">
    <property type="entry name" value="SH"/>
</dbReference>
<dbReference type="Pfam" id="PF01445">
    <property type="entry name" value="SH"/>
    <property type="match status" value="1"/>
</dbReference>
<dbReference type="PIRSF" id="PIRSF003923">
    <property type="entry name" value="SH"/>
    <property type="match status" value="1"/>
</dbReference>
<comment type="function">
    <text evidence="2">Plays a role in the inhibition of the host NF-kappa-B pathway. This inhibition occurs at the receptor level, by preventing the signaling of TNFR1 as well as IL-1R and TLR3.</text>
</comment>
<comment type="subunit">
    <text evidence="1 2">Interacts with host TNFRSF1A, RIPK1 and IRAK1; these interactions interfere with host NF-kappa-B activation at the level of receptor complexes (By similarity). Interacts with host protein UBQLN4 (By similarity).</text>
</comment>
<comment type="subcellular location">
    <subcellularLocation>
        <location evidence="2">Virion membrane</location>
        <topology evidence="2">Single-pass membrane protein</topology>
    </subcellularLocation>
    <subcellularLocation>
        <location evidence="2">Host cell membrane</location>
        <topology evidence="2">Single-pass membrane protein</topology>
    </subcellularLocation>
</comment>
<comment type="similarity">
    <text evidence="4">Belongs to the rubulavirus small hydrophobic protein family.</text>
</comment>
<gene>
    <name type="primary">SH</name>
</gene>
<feature type="chain" id="PRO_0000142885" description="Small hydrophobic protein">
    <location>
        <begin position="1"/>
        <end position="57"/>
    </location>
</feature>
<feature type="topological domain" description="Virion surface" evidence="3">
    <location>
        <begin position="1"/>
        <end position="8"/>
    </location>
</feature>
<feature type="transmembrane region" description="Helical" evidence="3">
    <location>
        <begin position="9"/>
        <end position="29"/>
    </location>
</feature>
<feature type="topological domain" description="Intravirion" evidence="3">
    <location>
        <begin position="30"/>
        <end position="57"/>
    </location>
</feature>
<name>SH_MUMPU</name>
<keyword id="KW-1032">Host cell membrane</keyword>
<keyword id="KW-1043">Host membrane</keyword>
<keyword id="KW-0945">Host-virus interaction</keyword>
<keyword id="KW-1100">Inhibition of host NF-kappa-B by virus</keyword>
<keyword id="KW-0472">Membrane</keyword>
<keyword id="KW-0812">Transmembrane</keyword>
<keyword id="KW-1133">Transmembrane helix</keyword>
<keyword id="KW-0946">Virion</keyword>